<dbReference type="EC" id="4.3.2.2" evidence="1"/>
<dbReference type="EMBL" id="CP000627">
    <property type="protein sequence ID" value="ABQ21474.1"/>
    <property type="molecule type" value="Genomic_DNA"/>
</dbReference>
<dbReference type="RefSeq" id="WP_000423489.1">
    <property type="nucleotide sequence ID" value="NZ_JAACZH010000005.1"/>
</dbReference>
<dbReference type="SMR" id="A0A0H3AL67"/>
<dbReference type="KEGG" id="vco:VC0395_A0644"/>
<dbReference type="KEGG" id="vcr:VC395_1141"/>
<dbReference type="PATRIC" id="fig|345073.21.peg.1108"/>
<dbReference type="eggNOG" id="COG0015">
    <property type="taxonomic scope" value="Bacteria"/>
</dbReference>
<dbReference type="OrthoDB" id="9768878at2"/>
<dbReference type="UniPathway" id="UPA00074">
    <property type="reaction ID" value="UER00132"/>
</dbReference>
<dbReference type="UniPathway" id="UPA00075">
    <property type="reaction ID" value="UER00336"/>
</dbReference>
<dbReference type="Proteomes" id="UP000000249">
    <property type="component" value="Chromosome 2"/>
</dbReference>
<dbReference type="GO" id="GO:0005829">
    <property type="term" value="C:cytosol"/>
    <property type="evidence" value="ECO:0007669"/>
    <property type="project" value="TreeGrafter"/>
</dbReference>
<dbReference type="GO" id="GO:0004018">
    <property type="term" value="F:N6-(1,2-dicarboxyethyl)AMP AMP-lyase (fumarate-forming) activity"/>
    <property type="evidence" value="ECO:0007669"/>
    <property type="project" value="InterPro"/>
</dbReference>
<dbReference type="GO" id="GO:0044208">
    <property type="term" value="P:'de novo' AMP biosynthetic process"/>
    <property type="evidence" value="ECO:0007669"/>
    <property type="project" value="UniProtKB-UniPathway"/>
</dbReference>
<dbReference type="GO" id="GO:0006189">
    <property type="term" value="P:'de novo' IMP biosynthetic process"/>
    <property type="evidence" value="ECO:0007669"/>
    <property type="project" value="UniProtKB-UniPathway"/>
</dbReference>
<dbReference type="CDD" id="cd01598">
    <property type="entry name" value="PurB"/>
    <property type="match status" value="1"/>
</dbReference>
<dbReference type="FunFam" id="1.10.275.10:FF:000003">
    <property type="entry name" value="Adenylosuccinate lyase"/>
    <property type="match status" value="1"/>
</dbReference>
<dbReference type="FunFam" id="1.10.40.30:FF:000004">
    <property type="entry name" value="Adenylosuccinate lyase"/>
    <property type="match status" value="1"/>
</dbReference>
<dbReference type="FunFam" id="1.20.200.10:FF:000004">
    <property type="entry name" value="Adenylosuccinate lyase"/>
    <property type="match status" value="1"/>
</dbReference>
<dbReference type="Gene3D" id="1.10.40.30">
    <property type="entry name" value="Fumarase/aspartase (C-terminal domain)"/>
    <property type="match status" value="1"/>
</dbReference>
<dbReference type="Gene3D" id="1.20.200.10">
    <property type="entry name" value="Fumarase/aspartase (Central domain)"/>
    <property type="match status" value="1"/>
</dbReference>
<dbReference type="Gene3D" id="1.10.275.10">
    <property type="entry name" value="Fumarase/aspartase (N-terminal domain)"/>
    <property type="match status" value="1"/>
</dbReference>
<dbReference type="InterPro" id="IPR024083">
    <property type="entry name" value="Fumarase/histidase_N"/>
</dbReference>
<dbReference type="InterPro" id="IPR020557">
    <property type="entry name" value="Fumarate_lyase_CS"/>
</dbReference>
<dbReference type="InterPro" id="IPR000362">
    <property type="entry name" value="Fumarate_lyase_fam"/>
</dbReference>
<dbReference type="InterPro" id="IPR022761">
    <property type="entry name" value="Fumarate_lyase_N"/>
</dbReference>
<dbReference type="InterPro" id="IPR008948">
    <property type="entry name" value="L-Aspartase-like"/>
</dbReference>
<dbReference type="InterPro" id="IPR004769">
    <property type="entry name" value="Pur_lyase"/>
</dbReference>
<dbReference type="InterPro" id="IPR047136">
    <property type="entry name" value="PurB_bact"/>
</dbReference>
<dbReference type="InterPro" id="IPR013539">
    <property type="entry name" value="PurB_C"/>
</dbReference>
<dbReference type="NCBIfam" id="NF006764">
    <property type="entry name" value="PRK09285.1"/>
    <property type="match status" value="1"/>
</dbReference>
<dbReference type="NCBIfam" id="TIGR00928">
    <property type="entry name" value="purB"/>
    <property type="match status" value="1"/>
</dbReference>
<dbReference type="PANTHER" id="PTHR43411">
    <property type="entry name" value="ADENYLOSUCCINATE LYASE"/>
    <property type="match status" value="1"/>
</dbReference>
<dbReference type="PANTHER" id="PTHR43411:SF1">
    <property type="entry name" value="ADENYLOSUCCINATE LYASE"/>
    <property type="match status" value="1"/>
</dbReference>
<dbReference type="Pfam" id="PF08328">
    <property type="entry name" value="ASL_C"/>
    <property type="match status" value="1"/>
</dbReference>
<dbReference type="Pfam" id="PF00206">
    <property type="entry name" value="Lyase_1"/>
    <property type="match status" value="1"/>
</dbReference>
<dbReference type="PRINTS" id="PR00149">
    <property type="entry name" value="FUMRATELYASE"/>
</dbReference>
<dbReference type="SUPFAM" id="SSF48557">
    <property type="entry name" value="L-aspartase-like"/>
    <property type="match status" value="1"/>
</dbReference>
<dbReference type="PROSITE" id="PS00163">
    <property type="entry name" value="FUMARATE_LYASES"/>
    <property type="match status" value="1"/>
</dbReference>
<sequence>MELSALTAVSPVDGRYGSKTIALRSIFSEFGLLKYRTIVEIRWLQKLAATAEIAEVPAFSAEANQFLDAIAANFNEADALRIKEIERTTNHDVKAVEYFLKEKVAAMPELHAVNEFIHFACTSEDINNTSHALMLKEARDTVILPEIRNVIDAIRKLAEEYRDIPLLSRTHGQPASPSTMGKEMANVAYRMERQYKQIANVEILAKINGAVGNYNAHLSAYPTVDWHKFSEEFITESLGVDWNPYTTQIEPHDYIAELFEAVARFNTILIDFDRDVWGYIALGHFKQRTIAGEIGSSTMPHKVNPIDFENSEGNLGLANAVFTHLAQKLPISRWQRDLTDSTVLRNLGVGVGYAIIAYTSTLKGISKLEVNRDALLAELDHNWEVLAEPIQTVMRRYGIEKPYEKLKELTRGKRVDGEAMRQFIDGLALPAEEKTRLKAMTPASYIGYAIELTDKL</sequence>
<proteinExistence type="evidence at protein level"/>
<gene>
    <name evidence="5" type="primary">purB</name>
    <name evidence="5" type="ordered locus">VC0395_A0644</name>
</gene>
<reference key="1">
    <citation type="submission" date="2007-03" db="EMBL/GenBank/DDBJ databases">
        <authorList>
            <person name="Heidelberg J."/>
        </authorList>
    </citation>
    <scope>NUCLEOTIDE SEQUENCE [LARGE SCALE GENOMIC DNA]</scope>
    <source>
        <strain>ATCC 39541 / Classical Ogawa 395 / O395</strain>
    </source>
</reference>
<reference key="2">
    <citation type="journal article" date="2021" name="Science">
        <title>A third purine biosynthetic pathway encoded by aminoadenine-based viral DNA genomes.</title>
        <authorList>
            <person name="Sleiman D."/>
            <person name="Garcia P.S."/>
            <person name="Lagune M."/>
            <person name="Loc'h J."/>
            <person name="Haouz A."/>
            <person name="Taib N."/>
            <person name="Roethlisberger P."/>
            <person name="Gribaldo S."/>
            <person name="Marliere P."/>
            <person name="Kaminski P.A."/>
        </authorList>
    </citation>
    <scope>FUNCTION (MICROBIAL INFECTION)</scope>
    <scope>CATALYTIC ACTIVITY (MICROBIAL INFECTION)</scope>
    <scope>DISRUPTION PHENOTYPE</scope>
</reference>
<comment type="function">
    <text evidence="1">Catalyzes two reactions in de novo purine nucleotide biosynthesis. Catalyzes the breakdown of 5-aminoimidazole- (N-succinylocarboxamide) ribotide (SAICAR or 2-[5-amino-1-(5-phospho-beta-D-ribosyl)imidazole-4-carboxamido]succinate) to 5-aminoimidazole-4-carboxamide ribotide (AICAR or 5-amino-1-(5-phospho-beta-D-ribosyl)imidazole-4-carboxamide) and fumarate, and of adenylosuccinate (ADS or N(6)-(1,2-dicarboxyethyl)-AMP) to adenosine monophosphate (AMP) and fumarate.</text>
</comment>
<comment type="function">
    <text evidence="2">(Microbial infection) Catalyzes the conversion of 2-amino-2'-deoxyadenylo-succinate to dZMP and fumarate, when the bacterium is infected by a phage that produces the substrate of this reaction, a step in the synthesis of dZTP (2-amino-2'-deoxyadenosine 5'-triphosphate), which is a nucleotide then used by the phage as a DNA polymerase substrate.</text>
</comment>
<comment type="catalytic activity">
    <reaction evidence="1">
        <text>N(6)-(1,2-dicarboxyethyl)-AMP = fumarate + AMP</text>
        <dbReference type="Rhea" id="RHEA:16853"/>
        <dbReference type="ChEBI" id="CHEBI:29806"/>
        <dbReference type="ChEBI" id="CHEBI:57567"/>
        <dbReference type="ChEBI" id="CHEBI:456215"/>
        <dbReference type="EC" id="4.3.2.2"/>
    </reaction>
    <physiologicalReaction direction="left-to-right" evidence="1">
        <dbReference type="Rhea" id="RHEA:16854"/>
    </physiologicalReaction>
</comment>
<comment type="catalytic activity">
    <reaction evidence="1">
        <text>(2S)-2-[5-amino-1-(5-phospho-beta-D-ribosyl)imidazole-4-carboxamido]succinate = 5-amino-1-(5-phospho-beta-D-ribosyl)imidazole-4-carboxamide + fumarate</text>
        <dbReference type="Rhea" id="RHEA:23920"/>
        <dbReference type="ChEBI" id="CHEBI:29806"/>
        <dbReference type="ChEBI" id="CHEBI:58443"/>
        <dbReference type="ChEBI" id="CHEBI:58475"/>
        <dbReference type="EC" id="4.3.2.2"/>
    </reaction>
    <physiologicalReaction direction="left-to-right" evidence="1">
        <dbReference type="Rhea" id="RHEA:23921"/>
    </physiologicalReaction>
</comment>
<comment type="catalytic activity">
    <reaction evidence="2">
        <text>(2S)-2-amino-2'-deoxyadenylo-succinate = dZMP + fumarate</text>
        <dbReference type="Rhea" id="RHEA:67636"/>
        <dbReference type="ChEBI" id="CHEBI:29806"/>
        <dbReference type="ChEBI" id="CHEBI:172924"/>
        <dbReference type="ChEBI" id="CHEBI:172927"/>
    </reaction>
    <physiologicalReaction direction="left-to-right" evidence="4">
        <dbReference type="Rhea" id="RHEA:67637"/>
    </physiologicalReaction>
</comment>
<comment type="pathway">
    <text evidence="1">Purine metabolism; AMP biosynthesis via de novo pathway; AMP from IMP: step 2/2.</text>
</comment>
<comment type="pathway">
    <text evidence="1">Purine metabolism; IMP biosynthesis via de novo pathway; 5-amino-1-(5-phospho-D-ribosyl)imidazole-4-carboxamide from 5-amino-1-(5-phospho-D-ribosyl)imidazole-4-carboxylate: step 2/2.</text>
</comment>
<comment type="pathway">
    <text evidence="2">Purine metabolism.</text>
</comment>
<comment type="subunit">
    <text evidence="1">Homotetramer.</text>
</comment>
<comment type="disruption phenotype">
    <text evidence="2">A reduction in the expression of purB leads to a reduction in the efficiency of infection by a Vibrio phage.</text>
</comment>
<comment type="similarity">
    <text evidence="3">Belongs to the lyase 1 family. Adenylosuccinate lyase subfamily.</text>
</comment>
<accession>A0A0H3AL67</accession>
<feature type="chain" id="PRO_0000453795" description="Adenylosuccinate lyase">
    <location>
        <begin position="1"/>
        <end position="456"/>
    </location>
</feature>
<feature type="active site" description="Proton donor/acceptor" evidence="1">
    <location>
        <position position="171"/>
    </location>
</feature>
<feature type="active site" description="Proton donor/acceptor" evidence="1">
    <location>
        <position position="296"/>
    </location>
</feature>
<feature type="binding site" evidence="1">
    <location>
        <begin position="15"/>
        <end position="16"/>
    </location>
    <ligand>
        <name>N(6)-(1,2-dicarboxyethyl)-AMP</name>
        <dbReference type="ChEBI" id="CHEBI:57567"/>
    </ligand>
</feature>
<feature type="binding site" evidence="1">
    <location>
        <begin position="90"/>
        <end position="92"/>
    </location>
    <ligand>
        <name>N(6)-(1,2-dicarboxyethyl)-AMP</name>
        <dbReference type="ChEBI" id="CHEBI:57567"/>
    </ligand>
</feature>
<feature type="binding site" evidence="1">
    <location>
        <begin position="122"/>
        <end position="123"/>
    </location>
    <ligand>
        <name>N(6)-(1,2-dicarboxyethyl)-AMP</name>
        <dbReference type="ChEBI" id="CHEBI:57567"/>
    </ligand>
</feature>
<feature type="binding site" evidence="1">
    <location>
        <position position="248"/>
    </location>
    <ligand>
        <name>N(6)-(1,2-dicarboxyethyl)-AMP</name>
        <dbReference type="ChEBI" id="CHEBI:57567"/>
    </ligand>
</feature>
<feature type="binding site" evidence="1">
    <location>
        <position position="297"/>
    </location>
    <ligand>
        <name>N(6)-(1,2-dicarboxyethyl)-AMP</name>
        <dbReference type="ChEBI" id="CHEBI:57567"/>
    </ligand>
</feature>
<feature type="binding site" evidence="1">
    <location>
        <begin position="302"/>
        <end position="304"/>
    </location>
    <ligand>
        <name>N(6)-(1,2-dicarboxyethyl)-AMP</name>
        <dbReference type="ChEBI" id="CHEBI:57567"/>
    </ligand>
</feature>
<feature type="binding site" evidence="1">
    <location>
        <position position="310"/>
    </location>
    <ligand>
        <name>N(6)-(1,2-dicarboxyethyl)-AMP</name>
        <dbReference type="ChEBI" id="CHEBI:57567"/>
    </ligand>
</feature>
<feature type="binding site" evidence="1">
    <location>
        <position position="336"/>
    </location>
    <ligand>
        <name>N(6)-(1,2-dicarboxyethyl)-AMP</name>
        <dbReference type="ChEBI" id="CHEBI:57567"/>
    </ligand>
</feature>
<feature type="binding site" evidence="1">
    <location>
        <begin position="341"/>
        <end position="345"/>
    </location>
    <ligand>
        <name>N(6)-(1,2-dicarboxyethyl)-AMP</name>
        <dbReference type="ChEBI" id="CHEBI:57567"/>
    </ligand>
</feature>
<evidence type="ECO:0000250" key="1">
    <source>
        <dbReference type="UniProtKB" id="P0AB89"/>
    </source>
</evidence>
<evidence type="ECO:0000269" key="2">
    <source>
    </source>
</evidence>
<evidence type="ECO:0000305" key="3"/>
<evidence type="ECO:0000305" key="4">
    <source>
    </source>
</evidence>
<evidence type="ECO:0000312" key="5">
    <source>
        <dbReference type="EMBL" id="ABQ21474.1"/>
    </source>
</evidence>
<protein>
    <recommendedName>
        <fullName>Adenylosuccinate lyase</fullName>
        <shortName>ASL</shortName>
        <ecNumber evidence="1">4.3.2.2</ecNumber>
    </recommendedName>
    <alternativeName>
        <fullName>Adenylosuccinase</fullName>
    </alternativeName>
</protein>
<organism>
    <name type="scientific">Vibrio cholerae serotype O1 (strain ATCC 39541 / Classical Ogawa 395 / O395)</name>
    <dbReference type="NCBI Taxonomy" id="345073"/>
    <lineage>
        <taxon>Bacteria</taxon>
        <taxon>Pseudomonadati</taxon>
        <taxon>Pseudomonadota</taxon>
        <taxon>Gammaproteobacteria</taxon>
        <taxon>Vibrionales</taxon>
        <taxon>Vibrionaceae</taxon>
        <taxon>Vibrio</taxon>
    </lineage>
</organism>
<name>PUR8_VIBC3</name>
<keyword id="KW-0456">Lyase</keyword>
<keyword id="KW-0658">Purine biosynthesis</keyword>